<proteinExistence type="evidence at transcript level"/>
<keyword id="KW-1015">Disulfide bond</keyword>
<keyword id="KW-0325">Glycoprotein</keyword>
<keyword id="KW-0378">Hydrolase</keyword>
<keyword id="KW-0645">Protease</keyword>
<keyword id="KW-1185">Reference proteome</keyword>
<keyword id="KW-0720">Serine protease</keyword>
<keyword id="KW-0732">Signal</keyword>
<keyword id="KW-0865">Zymogen</keyword>
<gene>
    <name type="primary">Klk1b8</name>
    <name type="synonym">Klk-8</name>
    <name type="synonym">Klk8</name>
</gene>
<reference key="1">
    <citation type="journal article" date="1986" name="Nucleic Acids Res.">
        <title>The sequence of a cDNA clone coding for a novel kallikrein from mouse submaxillary gland.</title>
        <authorList>
            <person name="Fahnestock M."/>
            <person name="Brundage S."/>
            <person name="Shooter E.M."/>
        </authorList>
    </citation>
    <scope>NUCLEOTIDE SEQUENCE [MRNA]</scope>
</reference>
<reference key="2">
    <citation type="journal article" date="1987" name="J. Biol. Chem.">
        <title>Mouse glandular kallikrein genes. Structure and partial sequence analysis of the kallikrein gene locus.</title>
        <authorList>
            <person name="Evans B.A."/>
            <person name="Drinkwater C.C."/>
            <person name="Richards R.I."/>
        </authorList>
    </citation>
    <scope>NUCLEOTIDE SEQUENCE OF 16-54 AND 70-122</scope>
</reference>
<sequence length="261" mass="28531">MRFLILFLALSLGGIDAAPPLQSRVVGGFNCEKNSQPWQVAVYDNKEHICGGVLLERNWVLTAAHCYVDQYEVWLGKNKLFQEEPSAQHRLVSKSFPHPGFNMSLLTLKEIPPGADFSNDLMLLRLSKPADITDAVKPITLPTKESKLGSTCLASGWGSITPTKWQKPDDLQCVFLKLLPIKNCIENHNVKVTDVMLCAGEMSGGKNICKGDSGGPLICDSVLQGITSTGPIPCGKPGVPAMYTNLIKFNSWIKDTMTKNS</sequence>
<feature type="signal peptide" evidence="2">
    <location>
        <begin position="1"/>
        <end position="18"/>
    </location>
</feature>
<feature type="propeptide" id="PRO_0000027977" description="Activation peptide" evidence="2">
    <location>
        <begin position="19"/>
        <end position="24"/>
    </location>
</feature>
<feature type="chain" id="PRO_0000027978" description="Kallikrein 1-related peptidase b8">
    <location>
        <begin position="25"/>
        <end position="261"/>
    </location>
</feature>
<feature type="domain" description="Peptidase S1" evidence="1">
    <location>
        <begin position="25"/>
        <end position="258"/>
    </location>
</feature>
<feature type="active site" description="Charge relay system">
    <location>
        <position position="65"/>
    </location>
</feature>
<feature type="active site" description="Charge relay system">
    <location>
        <position position="120"/>
    </location>
</feature>
<feature type="active site" description="Charge relay system">
    <location>
        <position position="213"/>
    </location>
</feature>
<feature type="glycosylation site" description="N-linked (GlcNAc...) asparagine" evidence="2">
    <location>
        <position position="102"/>
    </location>
</feature>
<feature type="disulfide bond" evidence="1">
    <location>
        <begin position="31"/>
        <end position="173"/>
    </location>
</feature>
<feature type="disulfide bond" evidence="1">
    <location>
        <begin position="50"/>
        <end position="66"/>
    </location>
</feature>
<feature type="disulfide bond" evidence="1">
    <location>
        <begin position="152"/>
        <end position="219"/>
    </location>
</feature>
<feature type="disulfide bond" evidence="1">
    <location>
        <begin position="184"/>
        <end position="198"/>
    </location>
</feature>
<feature type="disulfide bond" evidence="1">
    <location>
        <begin position="209"/>
        <end position="234"/>
    </location>
</feature>
<organism>
    <name type="scientific">Mus musculus</name>
    <name type="common">Mouse</name>
    <dbReference type="NCBI Taxonomy" id="10090"/>
    <lineage>
        <taxon>Eukaryota</taxon>
        <taxon>Metazoa</taxon>
        <taxon>Chordata</taxon>
        <taxon>Craniata</taxon>
        <taxon>Vertebrata</taxon>
        <taxon>Euteleostomi</taxon>
        <taxon>Mammalia</taxon>
        <taxon>Eutheria</taxon>
        <taxon>Euarchontoglires</taxon>
        <taxon>Glires</taxon>
        <taxon>Rodentia</taxon>
        <taxon>Myomorpha</taxon>
        <taxon>Muroidea</taxon>
        <taxon>Muridae</taxon>
        <taxon>Murinae</taxon>
        <taxon>Mus</taxon>
        <taxon>Mus</taxon>
    </lineage>
</organism>
<evidence type="ECO:0000255" key="1">
    <source>
        <dbReference type="PROSITE-ProRule" id="PRU00274"/>
    </source>
</evidence>
<evidence type="ECO:0000305" key="2"/>
<comment type="function">
    <text>Glandular kallikreins cleave Met-Lys and Arg-Ser bonds in kininogen to release Lys-bradykinin.</text>
</comment>
<comment type="catalytic activity">
    <reaction>
        <text>Preferential cleavage of Arg-|-Xaa bonds in small molecule substrates. Highly selective action to release kallidin (lysyl-bradykinin) from kininogen involves hydrolysis of Met-|-Xaa or Leu-|-Xaa.</text>
        <dbReference type="EC" id="3.4.21.35"/>
    </reaction>
</comment>
<comment type="similarity">
    <text evidence="1">Belongs to the peptidase S1 family. Kallikrein subfamily.</text>
</comment>
<protein>
    <recommendedName>
        <fullName>Kallikrein 1-related peptidase b8</fullName>
        <ecNumber>3.4.21.35</ecNumber>
    </recommendedName>
    <alternativeName>
        <fullName>Glandular kallikrein K8</fullName>
        <shortName>mGK-8</shortName>
    </alternativeName>
    <alternativeName>
        <fullName>Tissue kallikrein-8</fullName>
    </alternativeName>
</protein>
<name>K1KB8_MOUSE</name>
<dbReference type="EC" id="3.4.21.35"/>
<dbReference type="EMBL" id="X03994">
    <property type="protein sequence ID" value="CAA27630.1"/>
    <property type="molecule type" value="mRNA"/>
</dbReference>
<dbReference type="EMBL" id="M18587">
    <property type="protein sequence ID" value="AAA39347.1"/>
    <property type="molecule type" value="Genomic_DNA"/>
</dbReference>
<dbReference type="EMBL" id="M18607">
    <property type="protein sequence ID" value="AAA39348.1"/>
    <property type="molecule type" value="Genomic_DNA"/>
</dbReference>
<dbReference type="CCDS" id="CCDS21189.1"/>
<dbReference type="PIR" id="A24378">
    <property type="entry name" value="A24378"/>
</dbReference>
<dbReference type="RefSeq" id="NP_032483.1">
    <property type="nucleotide sequence ID" value="NM_008457.3"/>
</dbReference>
<dbReference type="SMR" id="P07628"/>
<dbReference type="FunCoup" id="P07628">
    <property type="interactions" value="59"/>
</dbReference>
<dbReference type="STRING" id="10090.ENSMUSP00000072063"/>
<dbReference type="MEROPS" id="S01.067"/>
<dbReference type="GlyCosmos" id="P07628">
    <property type="glycosylation" value="1 site, No reported glycans"/>
</dbReference>
<dbReference type="GlyGen" id="P07628">
    <property type="glycosylation" value="1 site"/>
</dbReference>
<dbReference type="PaxDb" id="10090-ENSMUSP00000072063"/>
<dbReference type="ProteomicsDB" id="269167"/>
<dbReference type="DNASU" id="16624"/>
<dbReference type="Ensembl" id="ENSMUST00000072204.5">
    <property type="protein sequence ID" value="ENSMUSP00000072063.5"/>
    <property type="gene ID" value="ENSMUSG00000063089.5"/>
</dbReference>
<dbReference type="GeneID" id="16624"/>
<dbReference type="KEGG" id="mmu:16624"/>
<dbReference type="UCSC" id="uc009gob.1">
    <property type="organism name" value="mouse"/>
</dbReference>
<dbReference type="AGR" id="MGI:892018"/>
<dbReference type="CTD" id="16624"/>
<dbReference type="MGI" id="MGI:892018">
    <property type="gene designation" value="Klk1b8"/>
</dbReference>
<dbReference type="VEuPathDB" id="HostDB:ENSMUSG00000063089"/>
<dbReference type="eggNOG" id="KOG3627">
    <property type="taxonomic scope" value="Eukaryota"/>
</dbReference>
<dbReference type="GeneTree" id="ENSGT01020000230389"/>
<dbReference type="HOGENOM" id="CLU_006842_1_1_1"/>
<dbReference type="InParanoid" id="P07628"/>
<dbReference type="OrthoDB" id="10061449at2759"/>
<dbReference type="PhylomeDB" id="P07628"/>
<dbReference type="TreeFam" id="TF331065"/>
<dbReference type="BRENDA" id="3.4.21.118">
    <property type="organism ID" value="3474"/>
</dbReference>
<dbReference type="Reactome" id="R-MMU-1592389">
    <property type="pathway name" value="Activation of Matrix Metalloproteinases"/>
</dbReference>
<dbReference type="BioGRID-ORCS" id="16624">
    <property type="hits" value="3 hits in 78 CRISPR screens"/>
</dbReference>
<dbReference type="ChiTaRS" id="Klk1b8">
    <property type="organism name" value="mouse"/>
</dbReference>
<dbReference type="PRO" id="PR:P07628"/>
<dbReference type="Proteomes" id="UP000000589">
    <property type="component" value="Chromosome 7"/>
</dbReference>
<dbReference type="RNAct" id="P07628">
    <property type="molecule type" value="protein"/>
</dbReference>
<dbReference type="Bgee" id="ENSMUSG00000063089">
    <property type="expression patterns" value="Expressed in submandibular gland and 134 other cell types or tissues"/>
</dbReference>
<dbReference type="GO" id="GO:0004252">
    <property type="term" value="F:serine-type endopeptidase activity"/>
    <property type="evidence" value="ECO:0007669"/>
    <property type="project" value="UniProtKB-EC"/>
</dbReference>
<dbReference type="GO" id="GO:0006508">
    <property type="term" value="P:proteolysis"/>
    <property type="evidence" value="ECO:0007669"/>
    <property type="project" value="UniProtKB-KW"/>
</dbReference>
<dbReference type="CDD" id="cd00190">
    <property type="entry name" value="Tryp_SPc"/>
    <property type="match status" value="1"/>
</dbReference>
<dbReference type="FunFam" id="2.40.10.10:FF:000010">
    <property type="entry name" value="Kallikrein related peptidase 11"/>
    <property type="match status" value="1"/>
</dbReference>
<dbReference type="Gene3D" id="2.40.10.10">
    <property type="entry name" value="Trypsin-like serine proteases"/>
    <property type="match status" value="2"/>
</dbReference>
<dbReference type="InterPro" id="IPR009003">
    <property type="entry name" value="Peptidase_S1_PA"/>
</dbReference>
<dbReference type="InterPro" id="IPR043504">
    <property type="entry name" value="Peptidase_S1_PA_chymotrypsin"/>
</dbReference>
<dbReference type="InterPro" id="IPR001314">
    <property type="entry name" value="Peptidase_S1A"/>
</dbReference>
<dbReference type="InterPro" id="IPR001254">
    <property type="entry name" value="Trypsin_dom"/>
</dbReference>
<dbReference type="InterPro" id="IPR018114">
    <property type="entry name" value="TRYPSIN_HIS"/>
</dbReference>
<dbReference type="InterPro" id="IPR033116">
    <property type="entry name" value="TRYPSIN_SER"/>
</dbReference>
<dbReference type="PANTHER" id="PTHR24271:SF47">
    <property type="entry name" value="KALLIKREIN-1"/>
    <property type="match status" value="1"/>
</dbReference>
<dbReference type="PANTHER" id="PTHR24271">
    <property type="entry name" value="KALLIKREIN-RELATED"/>
    <property type="match status" value="1"/>
</dbReference>
<dbReference type="Pfam" id="PF00089">
    <property type="entry name" value="Trypsin"/>
    <property type="match status" value="1"/>
</dbReference>
<dbReference type="PRINTS" id="PR00722">
    <property type="entry name" value="CHYMOTRYPSIN"/>
</dbReference>
<dbReference type="SMART" id="SM00020">
    <property type="entry name" value="Tryp_SPc"/>
    <property type="match status" value="1"/>
</dbReference>
<dbReference type="SUPFAM" id="SSF50494">
    <property type="entry name" value="Trypsin-like serine proteases"/>
    <property type="match status" value="1"/>
</dbReference>
<dbReference type="PROSITE" id="PS50240">
    <property type="entry name" value="TRYPSIN_DOM"/>
    <property type="match status" value="1"/>
</dbReference>
<dbReference type="PROSITE" id="PS00134">
    <property type="entry name" value="TRYPSIN_HIS"/>
    <property type="match status" value="1"/>
</dbReference>
<dbReference type="PROSITE" id="PS00135">
    <property type="entry name" value="TRYPSIN_SER"/>
    <property type="match status" value="1"/>
</dbReference>
<accession>P07628</accession>